<accession>A6SY47</accession>
<keyword id="KW-0520">NAD</keyword>
<keyword id="KW-0560">Oxidoreductase</keyword>
<keyword id="KW-0816">Tricarboxylic acid cycle</keyword>
<reference key="1">
    <citation type="journal article" date="2007" name="PLoS Genet.">
        <title>Genome analysis of Minibacterium massiliensis highlights the convergent evolution of water-living bacteria.</title>
        <authorList>
            <person name="Audic S."/>
            <person name="Robert C."/>
            <person name="Campagna B."/>
            <person name="Parinello H."/>
            <person name="Claverie J.-M."/>
            <person name="Raoult D."/>
            <person name="Drancourt M."/>
        </authorList>
    </citation>
    <scope>NUCLEOTIDE SEQUENCE [LARGE SCALE GENOMIC DNA]</scope>
    <source>
        <strain>Marseille</strain>
    </source>
</reference>
<protein>
    <recommendedName>
        <fullName evidence="1">Malate dehydrogenase</fullName>
        <ecNumber evidence="1">1.1.1.37</ecNumber>
    </recommendedName>
</protein>
<feature type="chain" id="PRO_1000068604" description="Malate dehydrogenase">
    <location>
        <begin position="1"/>
        <end position="329"/>
    </location>
</feature>
<feature type="active site" description="Proton acceptor" evidence="1">
    <location>
        <position position="190"/>
    </location>
</feature>
<feature type="binding site" evidence="1">
    <location>
        <begin position="12"/>
        <end position="18"/>
    </location>
    <ligand>
        <name>NAD(+)</name>
        <dbReference type="ChEBI" id="CHEBI:57540"/>
    </ligand>
</feature>
<feature type="binding site" evidence="1">
    <location>
        <position position="95"/>
    </location>
    <ligand>
        <name>substrate</name>
    </ligand>
</feature>
<feature type="binding site" evidence="1">
    <location>
        <position position="101"/>
    </location>
    <ligand>
        <name>substrate</name>
    </ligand>
</feature>
<feature type="binding site" evidence="1">
    <location>
        <position position="108"/>
    </location>
    <ligand>
        <name>NAD(+)</name>
        <dbReference type="ChEBI" id="CHEBI:57540"/>
    </ligand>
</feature>
<feature type="binding site" evidence="1">
    <location>
        <position position="115"/>
    </location>
    <ligand>
        <name>NAD(+)</name>
        <dbReference type="ChEBI" id="CHEBI:57540"/>
    </ligand>
</feature>
<feature type="binding site" evidence="1">
    <location>
        <begin position="132"/>
        <end position="134"/>
    </location>
    <ligand>
        <name>NAD(+)</name>
        <dbReference type="ChEBI" id="CHEBI:57540"/>
    </ligand>
</feature>
<feature type="binding site" evidence="1">
    <location>
        <position position="134"/>
    </location>
    <ligand>
        <name>substrate</name>
    </ligand>
</feature>
<feature type="binding site" evidence="1">
    <location>
        <position position="165"/>
    </location>
    <ligand>
        <name>substrate</name>
    </ligand>
</feature>
<dbReference type="EC" id="1.1.1.37" evidence="1"/>
<dbReference type="EMBL" id="CP000269">
    <property type="protein sequence ID" value="ABR88530.1"/>
    <property type="molecule type" value="Genomic_DNA"/>
</dbReference>
<dbReference type="RefSeq" id="WP_012079360.1">
    <property type="nucleotide sequence ID" value="NC_009659.1"/>
</dbReference>
<dbReference type="SMR" id="A6SY47"/>
<dbReference type="STRING" id="375286.mma_1504"/>
<dbReference type="KEGG" id="mms:mma_1504"/>
<dbReference type="eggNOG" id="COG0039">
    <property type="taxonomic scope" value="Bacteria"/>
</dbReference>
<dbReference type="HOGENOM" id="CLU_040727_2_0_4"/>
<dbReference type="OrthoDB" id="9802969at2"/>
<dbReference type="Proteomes" id="UP000006388">
    <property type="component" value="Chromosome"/>
</dbReference>
<dbReference type="GO" id="GO:0030060">
    <property type="term" value="F:L-malate dehydrogenase (NAD+) activity"/>
    <property type="evidence" value="ECO:0007669"/>
    <property type="project" value="UniProtKB-UniRule"/>
</dbReference>
<dbReference type="GO" id="GO:0006108">
    <property type="term" value="P:malate metabolic process"/>
    <property type="evidence" value="ECO:0007669"/>
    <property type="project" value="InterPro"/>
</dbReference>
<dbReference type="GO" id="GO:0006099">
    <property type="term" value="P:tricarboxylic acid cycle"/>
    <property type="evidence" value="ECO:0007669"/>
    <property type="project" value="UniProtKB-UniRule"/>
</dbReference>
<dbReference type="CDD" id="cd01338">
    <property type="entry name" value="MDH_chloroplast-like"/>
    <property type="match status" value="1"/>
</dbReference>
<dbReference type="FunFam" id="3.40.50.720:FF:000010">
    <property type="entry name" value="Malate dehydrogenase"/>
    <property type="match status" value="1"/>
</dbReference>
<dbReference type="FunFam" id="3.90.110.10:FF:000002">
    <property type="entry name" value="Malate dehydrogenase"/>
    <property type="match status" value="1"/>
</dbReference>
<dbReference type="Gene3D" id="3.90.110.10">
    <property type="entry name" value="Lactate dehydrogenase/glycoside hydrolase, family 4, C-terminal"/>
    <property type="match status" value="1"/>
</dbReference>
<dbReference type="Gene3D" id="3.40.50.720">
    <property type="entry name" value="NAD(P)-binding Rossmann-like Domain"/>
    <property type="match status" value="1"/>
</dbReference>
<dbReference type="HAMAP" id="MF_01517">
    <property type="entry name" value="Malate_dehydrog_2"/>
    <property type="match status" value="1"/>
</dbReference>
<dbReference type="InterPro" id="IPR001557">
    <property type="entry name" value="L-lactate/malate_DH"/>
</dbReference>
<dbReference type="InterPro" id="IPR022383">
    <property type="entry name" value="Lactate/malate_DH_C"/>
</dbReference>
<dbReference type="InterPro" id="IPR001236">
    <property type="entry name" value="Lactate/malate_DH_N"/>
</dbReference>
<dbReference type="InterPro" id="IPR015955">
    <property type="entry name" value="Lactate_DH/Glyco_Ohase_4_C"/>
</dbReference>
<dbReference type="InterPro" id="IPR010945">
    <property type="entry name" value="Malate_DH_type2"/>
</dbReference>
<dbReference type="InterPro" id="IPR036291">
    <property type="entry name" value="NAD(P)-bd_dom_sf"/>
</dbReference>
<dbReference type="NCBIfam" id="TIGR01759">
    <property type="entry name" value="MalateDH-SF1"/>
    <property type="match status" value="1"/>
</dbReference>
<dbReference type="NCBIfam" id="NF003916">
    <property type="entry name" value="PRK05442.1"/>
    <property type="match status" value="1"/>
</dbReference>
<dbReference type="PANTHER" id="PTHR23382">
    <property type="entry name" value="MALATE DEHYDROGENASE"/>
    <property type="match status" value="1"/>
</dbReference>
<dbReference type="Pfam" id="PF02866">
    <property type="entry name" value="Ldh_1_C"/>
    <property type="match status" value="1"/>
</dbReference>
<dbReference type="Pfam" id="PF00056">
    <property type="entry name" value="Ldh_1_N"/>
    <property type="match status" value="1"/>
</dbReference>
<dbReference type="PIRSF" id="PIRSF000102">
    <property type="entry name" value="Lac_mal_DH"/>
    <property type="match status" value="1"/>
</dbReference>
<dbReference type="SUPFAM" id="SSF56327">
    <property type="entry name" value="LDH C-terminal domain-like"/>
    <property type="match status" value="1"/>
</dbReference>
<dbReference type="SUPFAM" id="SSF51735">
    <property type="entry name" value="NAD(P)-binding Rossmann-fold domains"/>
    <property type="match status" value="1"/>
</dbReference>
<comment type="function">
    <text evidence="1">Catalyzes the reversible oxidation of malate to oxaloacetate.</text>
</comment>
<comment type="catalytic activity">
    <reaction evidence="1">
        <text>(S)-malate + NAD(+) = oxaloacetate + NADH + H(+)</text>
        <dbReference type="Rhea" id="RHEA:21432"/>
        <dbReference type="ChEBI" id="CHEBI:15378"/>
        <dbReference type="ChEBI" id="CHEBI:15589"/>
        <dbReference type="ChEBI" id="CHEBI:16452"/>
        <dbReference type="ChEBI" id="CHEBI:57540"/>
        <dbReference type="ChEBI" id="CHEBI:57945"/>
        <dbReference type="EC" id="1.1.1.37"/>
    </reaction>
</comment>
<comment type="similarity">
    <text evidence="1">Belongs to the LDH/MDH superfamily. MDH type 2 family.</text>
</comment>
<sequence length="329" mass="35302">MAKAPMRVAVTGAAGQIGYSLLFRIANGDLLGKDQPVILQLLEIADEKAQKALKGVIMEIDDCAFPLLAGVTAHSDPMTAFKDADVALLVGARPRGPGMERKDLLEANAQIFTVQGKALDAVASRNVKVLVVGNPANTNAYIAMKSAPNLPAKNFTAMLRLDHNRALSQIAAKISKPVTSIEKLTVWGNHSPTMYPDYRFATADGKSVKEAINDEVWNKDVFLPTVGKRGAAIIDARGVSSAASAANAAIDHVRDWVLGTNGKWVTMGIPSDGSYGIPKDTIFGFPVTVENGEYKIVQGLEIDAFSQERINLTLKELLEEREGVKHLLG</sequence>
<gene>
    <name evidence="1" type="primary">mdh</name>
    <name type="ordered locus">mma_1504</name>
</gene>
<proteinExistence type="inferred from homology"/>
<organism>
    <name type="scientific">Janthinobacterium sp. (strain Marseille)</name>
    <name type="common">Minibacterium massiliensis</name>
    <dbReference type="NCBI Taxonomy" id="375286"/>
    <lineage>
        <taxon>Bacteria</taxon>
        <taxon>Pseudomonadati</taxon>
        <taxon>Pseudomonadota</taxon>
        <taxon>Betaproteobacteria</taxon>
        <taxon>Burkholderiales</taxon>
        <taxon>Oxalobacteraceae</taxon>
        <taxon>Janthinobacterium</taxon>
    </lineage>
</organism>
<name>MDH_JANMA</name>
<evidence type="ECO:0000255" key="1">
    <source>
        <dbReference type="HAMAP-Rule" id="MF_01517"/>
    </source>
</evidence>